<name>Y2127_COLP3</name>
<accession>Q483B4</accession>
<protein>
    <recommendedName>
        <fullName evidence="1">UPF0434 protein CPS_2127</fullName>
    </recommendedName>
</protein>
<comment type="similarity">
    <text evidence="1">Belongs to the UPF0434 family.</text>
</comment>
<gene>
    <name type="ordered locus">CPS_2127</name>
</gene>
<proteinExistence type="inferred from homology"/>
<organism>
    <name type="scientific">Colwellia psychrerythraea (strain 34H / ATCC BAA-681)</name>
    <name type="common">Vibrio psychroerythus</name>
    <dbReference type="NCBI Taxonomy" id="167879"/>
    <lineage>
        <taxon>Bacteria</taxon>
        <taxon>Pseudomonadati</taxon>
        <taxon>Pseudomonadota</taxon>
        <taxon>Gammaproteobacteria</taxon>
        <taxon>Alteromonadales</taxon>
        <taxon>Colwelliaceae</taxon>
        <taxon>Colwellia</taxon>
    </lineage>
</organism>
<dbReference type="EMBL" id="CP000083">
    <property type="protein sequence ID" value="AAZ25105.1"/>
    <property type="molecule type" value="Genomic_DNA"/>
</dbReference>
<dbReference type="RefSeq" id="WP_011042947.1">
    <property type="nucleotide sequence ID" value="NC_003910.7"/>
</dbReference>
<dbReference type="SMR" id="Q483B4"/>
<dbReference type="STRING" id="167879.CPS_2127"/>
<dbReference type="DNASU" id="3518565"/>
<dbReference type="KEGG" id="cps:CPS_2127"/>
<dbReference type="eggNOG" id="COG2835">
    <property type="taxonomic scope" value="Bacteria"/>
</dbReference>
<dbReference type="HOGENOM" id="CLU_155659_3_1_6"/>
<dbReference type="Proteomes" id="UP000000547">
    <property type="component" value="Chromosome"/>
</dbReference>
<dbReference type="GO" id="GO:0005829">
    <property type="term" value="C:cytosol"/>
    <property type="evidence" value="ECO:0007669"/>
    <property type="project" value="TreeGrafter"/>
</dbReference>
<dbReference type="FunFam" id="2.20.25.10:FF:000002">
    <property type="entry name" value="UPF0434 protein YcaR"/>
    <property type="match status" value="1"/>
</dbReference>
<dbReference type="Gene3D" id="2.20.25.10">
    <property type="match status" value="1"/>
</dbReference>
<dbReference type="HAMAP" id="MF_01187">
    <property type="entry name" value="UPF0434"/>
    <property type="match status" value="1"/>
</dbReference>
<dbReference type="InterPro" id="IPR005651">
    <property type="entry name" value="Trm112-like"/>
</dbReference>
<dbReference type="PANTHER" id="PTHR33505:SF4">
    <property type="entry name" value="PROTEIN PREY, MITOCHONDRIAL"/>
    <property type="match status" value="1"/>
</dbReference>
<dbReference type="PANTHER" id="PTHR33505">
    <property type="entry name" value="ZGC:162634"/>
    <property type="match status" value="1"/>
</dbReference>
<dbReference type="Pfam" id="PF03966">
    <property type="entry name" value="Trm112p"/>
    <property type="match status" value="1"/>
</dbReference>
<dbReference type="SUPFAM" id="SSF158997">
    <property type="entry name" value="Trm112p-like"/>
    <property type="match status" value="1"/>
</dbReference>
<reference key="1">
    <citation type="journal article" date="2005" name="Proc. Natl. Acad. Sci. U.S.A.">
        <title>The psychrophilic lifestyle as revealed by the genome sequence of Colwellia psychrerythraea 34H through genomic and proteomic analyses.</title>
        <authorList>
            <person name="Methe B.A."/>
            <person name="Nelson K.E."/>
            <person name="Deming J.W."/>
            <person name="Momen B."/>
            <person name="Melamud E."/>
            <person name="Zhang X."/>
            <person name="Moult J."/>
            <person name="Madupu R."/>
            <person name="Nelson W.C."/>
            <person name="Dodson R.J."/>
            <person name="Brinkac L.M."/>
            <person name="Daugherty S.C."/>
            <person name="Durkin A.S."/>
            <person name="DeBoy R.T."/>
            <person name="Kolonay J.F."/>
            <person name="Sullivan S.A."/>
            <person name="Zhou L."/>
            <person name="Davidsen T.M."/>
            <person name="Wu M."/>
            <person name="Huston A.L."/>
            <person name="Lewis M."/>
            <person name="Weaver B."/>
            <person name="Weidman J.F."/>
            <person name="Khouri H."/>
            <person name="Utterback T.R."/>
            <person name="Feldblyum T.V."/>
            <person name="Fraser C.M."/>
        </authorList>
    </citation>
    <scope>NUCLEOTIDE SEQUENCE [LARGE SCALE GENOMIC DNA]</scope>
    <source>
        <strain>34H / ATCC BAA-681</strain>
    </source>
</reference>
<sequence>MAFDTKLMEILACPVCKGKLDYDKAAQELICHFDRLAYSIEKDIPVLLENEAREINANQSTEQDG</sequence>
<evidence type="ECO:0000255" key="1">
    <source>
        <dbReference type="HAMAP-Rule" id="MF_01187"/>
    </source>
</evidence>
<feature type="chain" id="PRO_0000291083" description="UPF0434 protein CPS_2127">
    <location>
        <begin position="1"/>
        <end position="65"/>
    </location>
</feature>